<accession>Q5HIF7</accession>
<comment type="catalytic activity">
    <reaction evidence="1">
        <text>tRNA(Lys) + L-lysine + ATP = L-lysyl-tRNA(Lys) + AMP + diphosphate</text>
        <dbReference type="Rhea" id="RHEA:20792"/>
        <dbReference type="Rhea" id="RHEA-COMP:9696"/>
        <dbReference type="Rhea" id="RHEA-COMP:9697"/>
        <dbReference type="ChEBI" id="CHEBI:30616"/>
        <dbReference type="ChEBI" id="CHEBI:32551"/>
        <dbReference type="ChEBI" id="CHEBI:33019"/>
        <dbReference type="ChEBI" id="CHEBI:78442"/>
        <dbReference type="ChEBI" id="CHEBI:78529"/>
        <dbReference type="ChEBI" id="CHEBI:456215"/>
        <dbReference type="EC" id="6.1.1.6"/>
    </reaction>
</comment>
<comment type="cofactor">
    <cofactor evidence="1">
        <name>Mg(2+)</name>
        <dbReference type="ChEBI" id="CHEBI:18420"/>
    </cofactor>
    <text evidence="1">Binds 3 Mg(2+) ions per subunit.</text>
</comment>
<comment type="subunit">
    <text evidence="1">Homodimer.</text>
</comment>
<comment type="subcellular location">
    <subcellularLocation>
        <location evidence="1">Cytoplasm</location>
    </subcellularLocation>
</comment>
<comment type="similarity">
    <text evidence="1">Belongs to the class-II aminoacyl-tRNA synthetase family.</text>
</comment>
<sequence length="495" mass="56719">MSEEMNDQMLVRRQKLQELYDLGIDPFGSKFDRSGLSSDLKEEWDQYSKEELVEKEADSHVAIAGRLMTKRGKGKAGFAHVQDLAGQIQIYVRKDQVGDDEFDLWKNADLGDIVGVEGVMFKTNTGELSVKAKKFTLLTKSLRPLPDKFHGLQDIEQRYRQRYLDLITNEDSTRTFINRSKIIQEMRNYLNNKGFLEVETPMMHQIAGGAAARPFVTHHNALDATLYMRIAIELHLKRLIVGGLEKVYEIGRVFRNEGVSTRHNPEFTMIELYEAYADYHDIMDLTESMVRHIANEVLGSAKVQYNGETIDLESAWTRLHIVDAVKEATGVDFYEVKSDEEAKALAKEHGIEIKDTMKYGHILNEFFEQKVEETLIQPTFIYGHPTEISPLAKKNPEDPRFTDRFELFIVGREHANAFTELNDPIDQKGRFEAQLVEKAQGNDEAHEMDEDYIEALEYGMPPTGGLGIGIDRLVMLLTDSPSIRDVLLFPYMRQK</sequence>
<gene>
    <name evidence="1" type="primary">lysS</name>
    <name type="ordered locus">SACOL0562</name>
</gene>
<dbReference type="EC" id="6.1.1.6" evidence="1"/>
<dbReference type="EMBL" id="CP000046">
    <property type="protein sequence ID" value="AAW37674.1"/>
    <property type="molecule type" value="Genomic_DNA"/>
</dbReference>
<dbReference type="RefSeq" id="WP_001288202.1">
    <property type="nucleotide sequence ID" value="NZ_JBGOFO010000012.1"/>
</dbReference>
<dbReference type="SMR" id="Q5HIF7"/>
<dbReference type="GeneID" id="98344832"/>
<dbReference type="KEGG" id="sac:SACOL0562"/>
<dbReference type="HOGENOM" id="CLU_008255_6_0_9"/>
<dbReference type="Proteomes" id="UP000000530">
    <property type="component" value="Chromosome"/>
</dbReference>
<dbReference type="GO" id="GO:0005829">
    <property type="term" value="C:cytosol"/>
    <property type="evidence" value="ECO:0007669"/>
    <property type="project" value="TreeGrafter"/>
</dbReference>
<dbReference type="GO" id="GO:0005524">
    <property type="term" value="F:ATP binding"/>
    <property type="evidence" value="ECO:0007669"/>
    <property type="project" value="UniProtKB-UniRule"/>
</dbReference>
<dbReference type="GO" id="GO:0140096">
    <property type="term" value="F:catalytic activity, acting on a protein"/>
    <property type="evidence" value="ECO:0007669"/>
    <property type="project" value="UniProtKB-ARBA"/>
</dbReference>
<dbReference type="GO" id="GO:0004824">
    <property type="term" value="F:lysine-tRNA ligase activity"/>
    <property type="evidence" value="ECO:0007669"/>
    <property type="project" value="UniProtKB-UniRule"/>
</dbReference>
<dbReference type="GO" id="GO:0000287">
    <property type="term" value="F:magnesium ion binding"/>
    <property type="evidence" value="ECO:0007669"/>
    <property type="project" value="UniProtKB-UniRule"/>
</dbReference>
<dbReference type="GO" id="GO:0016740">
    <property type="term" value="F:transferase activity"/>
    <property type="evidence" value="ECO:0007669"/>
    <property type="project" value="UniProtKB-ARBA"/>
</dbReference>
<dbReference type="GO" id="GO:0000049">
    <property type="term" value="F:tRNA binding"/>
    <property type="evidence" value="ECO:0007669"/>
    <property type="project" value="TreeGrafter"/>
</dbReference>
<dbReference type="GO" id="GO:0006430">
    <property type="term" value="P:lysyl-tRNA aminoacylation"/>
    <property type="evidence" value="ECO:0007669"/>
    <property type="project" value="UniProtKB-UniRule"/>
</dbReference>
<dbReference type="CDD" id="cd00775">
    <property type="entry name" value="LysRS_core"/>
    <property type="match status" value="1"/>
</dbReference>
<dbReference type="CDD" id="cd04322">
    <property type="entry name" value="LysRS_N"/>
    <property type="match status" value="1"/>
</dbReference>
<dbReference type="FunFam" id="2.40.50.140:FF:000024">
    <property type="entry name" value="Lysine--tRNA ligase"/>
    <property type="match status" value="1"/>
</dbReference>
<dbReference type="FunFam" id="3.30.930.10:FF:000001">
    <property type="entry name" value="Lysine--tRNA ligase"/>
    <property type="match status" value="1"/>
</dbReference>
<dbReference type="Gene3D" id="3.30.930.10">
    <property type="entry name" value="Bira Bifunctional Protein, Domain 2"/>
    <property type="match status" value="1"/>
</dbReference>
<dbReference type="Gene3D" id="2.40.50.140">
    <property type="entry name" value="Nucleic acid-binding proteins"/>
    <property type="match status" value="1"/>
</dbReference>
<dbReference type="HAMAP" id="MF_00252">
    <property type="entry name" value="Lys_tRNA_synth_class2"/>
    <property type="match status" value="1"/>
</dbReference>
<dbReference type="InterPro" id="IPR004364">
    <property type="entry name" value="Aa-tRNA-synt_II"/>
</dbReference>
<dbReference type="InterPro" id="IPR006195">
    <property type="entry name" value="aa-tRNA-synth_II"/>
</dbReference>
<dbReference type="InterPro" id="IPR045864">
    <property type="entry name" value="aa-tRNA-synth_II/BPL/LPL"/>
</dbReference>
<dbReference type="InterPro" id="IPR002313">
    <property type="entry name" value="Lys-tRNA-ligase_II"/>
</dbReference>
<dbReference type="InterPro" id="IPR034762">
    <property type="entry name" value="Lys-tRNA-ligase_II_bac/euk"/>
</dbReference>
<dbReference type="InterPro" id="IPR044136">
    <property type="entry name" value="Lys-tRNA-ligase_II_N"/>
</dbReference>
<dbReference type="InterPro" id="IPR018149">
    <property type="entry name" value="Lys-tRNA-synth_II_C"/>
</dbReference>
<dbReference type="InterPro" id="IPR012340">
    <property type="entry name" value="NA-bd_OB-fold"/>
</dbReference>
<dbReference type="InterPro" id="IPR004365">
    <property type="entry name" value="NA-bd_OB_tRNA"/>
</dbReference>
<dbReference type="NCBIfam" id="TIGR00499">
    <property type="entry name" value="lysS_bact"/>
    <property type="match status" value="1"/>
</dbReference>
<dbReference type="NCBIfam" id="NF001756">
    <property type="entry name" value="PRK00484.1"/>
    <property type="match status" value="1"/>
</dbReference>
<dbReference type="PANTHER" id="PTHR42918:SF15">
    <property type="entry name" value="LYSINE--TRNA LIGASE, CHLOROPLASTIC_MITOCHONDRIAL"/>
    <property type="match status" value="1"/>
</dbReference>
<dbReference type="PANTHER" id="PTHR42918">
    <property type="entry name" value="LYSYL-TRNA SYNTHETASE"/>
    <property type="match status" value="1"/>
</dbReference>
<dbReference type="Pfam" id="PF00152">
    <property type="entry name" value="tRNA-synt_2"/>
    <property type="match status" value="1"/>
</dbReference>
<dbReference type="Pfam" id="PF01336">
    <property type="entry name" value="tRNA_anti-codon"/>
    <property type="match status" value="1"/>
</dbReference>
<dbReference type="PIRSF" id="PIRSF039101">
    <property type="entry name" value="LysRS2"/>
    <property type="match status" value="1"/>
</dbReference>
<dbReference type="PRINTS" id="PR00982">
    <property type="entry name" value="TRNASYNTHLYS"/>
</dbReference>
<dbReference type="SUPFAM" id="SSF55681">
    <property type="entry name" value="Class II aaRS and biotin synthetases"/>
    <property type="match status" value="1"/>
</dbReference>
<dbReference type="SUPFAM" id="SSF50249">
    <property type="entry name" value="Nucleic acid-binding proteins"/>
    <property type="match status" value="1"/>
</dbReference>
<dbReference type="PROSITE" id="PS50862">
    <property type="entry name" value="AA_TRNA_LIGASE_II"/>
    <property type="match status" value="1"/>
</dbReference>
<evidence type="ECO:0000255" key="1">
    <source>
        <dbReference type="HAMAP-Rule" id="MF_00252"/>
    </source>
</evidence>
<protein>
    <recommendedName>
        <fullName evidence="1">Lysine--tRNA ligase</fullName>
        <ecNumber evidence="1">6.1.1.6</ecNumber>
    </recommendedName>
    <alternativeName>
        <fullName evidence="1">Lysyl-tRNA synthetase</fullName>
        <shortName evidence="1">LysRS</shortName>
    </alternativeName>
</protein>
<name>SYK_STAAC</name>
<feature type="chain" id="PRO_0000152675" description="Lysine--tRNA ligase">
    <location>
        <begin position="1"/>
        <end position="495"/>
    </location>
</feature>
<feature type="binding site" evidence="1">
    <location>
        <position position="406"/>
    </location>
    <ligand>
        <name>Mg(2+)</name>
        <dbReference type="ChEBI" id="CHEBI:18420"/>
        <label>1</label>
    </ligand>
</feature>
<feature type="binding site" evidence="1">
    <location>
        <position position="413"/>
    </location>
    <ligand>
        <name>Mg(2+)</name>
        <dbReference type="ChEBI" id="CHEBI:18420"/>
        <label>1</label>
    </ligand>
</feature>
<feature type="binding site" evidence="1">
    <location>
        <position position="413"/>
    </location>
    <ligand>
        <name>Mg(2+)</name>
        <dbReference type="ChEBI" id="CHEBI:18420"/>
        <label>2</label>
    </ligand>
</feature>
<keyword id="KW-0030">Aminoacyl-tRNA synthetase</keyword>
<keyword id="KW-0067">ATP-binding</keyword>
<keyword id="KW-0963">Cytoplasm</keyword>
<keyword id="KW-0436">Ligase</keyword>
<keyword id="KW-0460">Magnesium</keyword>
<keyword id="KW-0479">Metal-binding</keyword>
<keyword id="KW-0547">Nucleotide-binding</keyword>
<keyword id="KW-0648">Protein biosynthesis</keyword>
<reference key="1">
    <citation type="journal article" date="2005" name="J. Bacteriol.">
        <title>Insights on evolution of virulence and resistance from the complete genome analysis of an early methicillin-resistant Staphylococcus aureus strain and a biofilm-producing methicillin-resistant Staphylococcus epidermidis strain.</title>
        <authorList>
            <person name="Gill S.R."/>
            <person name="Fouts D.E."/>
            <person name="Archer G.L."/>
            <person name="Mongodin E.F."/>
            <person name="DeBoy R.T."/>
            <person name="Ravel J."/>
            <person name="Paulsen I.T."/>
            <person name="Kolonay J.F."/>
            <person name="Brinkac L.M."/>
            <person name="Beanan M.J."/>
            <person name="Dodson R.J."/>
            <person name="Daugherty S.C."/>
            <person name="Madupu R."/>
            <person name="Angiuoli S.V."/>
            <person name="Durkin A.S."/>
            <person name="Haft D.H."/>
            <person name="Vamathevan J.J."/>
            <person name="Khouri H."/>
            <person name="Utterback T.R."/>
            <person name="Lee C."/>
            <person name="Dimitrov G."/>
            <person name="Jiang L."/>
            <person name="Qin H."/>
            <person name="Weidman J."/>
            <person name="Tran K."/>
            <person name="Kang K.H."/>
            <person name="Hance I.R."/>
            <person name="Nelson K.E."/>
            <person name="Fraser C.M."/>
        </authorList>
    </citation>
    <scope>NUCLEOTIDE SEQUENCE [LARGE SCALE GENOMIC DNA]</scope>
    <source>
        <strain>COL</strain>
    </source>
</reference>
<proteinExistence type="inferred from homology"/>
<organism>
    <name type="scientific">Staphylococcus aureus (strain COL)</name>
    <dbReference type="NCBI Taxonomy" id="93062"/>
    <lineage>
        <taxon>Bacteria</taxon>
        <taxon>Bacillati</taxon>
        <taxon>Bacillota</taxon>
        <taxon>Bacilli</taxon>
        <taxon>Bacillales</taxon>
        <taxon>Staphylococcaceae</taxon>
        <taxon>Staphylococcus</taxon>
    </lineage>
</organism>